<proteinExistence type="inferred from homology"/>
<gene>
    <name evidence="1" type="primary">rpmA</name>
    <name evidence="1" type="synonym">rpl27</name>
    <name type="ordered locus">P9301_15311</name>
</gene>
<dbReference type="EMBL" id="CP000576">
    <property type="protein sequence ID" value="ABO18154.1"/>
    <property type="molecule type" value="Genomic_DNA"/>
</dbReference>
<dbReference type="RefSeq" id="WP_011863458.1">
    <property type="nucleotide sequence ID" value="NC_009091.1"/>
</dbReference>
<dbReference type="SMR" id="A3PEH9"/>
<dbReference type="STRING" id="167546.P9301_15311"/>
<dbReference type="KEGG" id="pmg:P9301_15311"/>
<dbReference type="eggNOG" id="COG0211">
    <property type="taxonomic scope" value="Bacteria"/>
</dbReference>
<dbReference type="HOGENOM" id="CLU_095424_4_0_3"/>
<dbReference type="OrthoDB" id="9803474at2"/>
<dbReference type="Proteomes" id="UP000001430">
    <property type="component" value="Chromosome"/>
</dbReference>
<dbReference type="GO" id="GO:0022625">
    <property type="term" value="C:cytosolic large ribosomal subunit"/>
    <property type="evidence" value="ECO:0007669"/>
    <property type="project" value="TreeGrafter"/>
</dbReference>
<dbReference type="GO" id="GO:0003735">
    <property type="term" value="F:structural constituent of ribosome"/>
    <property type="evidence" value="ECO:0007669"/>
    <property type="project" value="InterPro"/>
</dbReference>
<dbReference type="GO" id="GO:0006412">
    <property type="term" value="P:translation"/>
    <property type="evidence" value="ECO:0007669"/>
    <property type="project" value="UniProtKB-UniRule"/>
</dbReference>
<dbReference type="FunFam" id="2.40.50.100:FF:000020">
    <property type="entry name" value="50S ribosomal protein L27"/>
    <property type="match status" value="1"/>
</dbReference>
<dbReference type="Gene3D" id="2.40.50.100">
    <property type="match status" value="1"/>
</dbReference>
<dbReference type="HAMAP" id="MF_00539">
    <property type="entry name" value="Ribosomal_bL27"/>
    <property type="match status" value="1"/>
</dbReference>
<dbReference type="InterPro" id="IPR001684">
    <property type="entry name" value="Ribosomal_bL27"/>
</dbReference>
<dbReference type="InterPro" id="IPR018261">
    <property type="entry name" value="Ribosomal_bL27_CS"/>
</dbReference>
<dbReference type="NCBIfam" id="TIGR00062">
    <property type="entry name" value="L27"/>
    <property type="match status" value="1"/>
</dbReference>
<dbReference type="PANTHER" id="PTHR15893:SF0">
    <property type="entry name" value="LARGE RIBOSOMAL SUBUNIT PROTEIN BL27M"/>
    <property type="match status" value="1"/>
</dbReference>
<dbReference type="PANTHER" id="PTHR15893">
    <property type="entry name" value="RIBOSOMAL PROTEIN L27"/>
    <property type="match status" value="1"/>
</dbReference>
<dbReference type="Pfam" id="PF01016">
    <property type="entry name" value="Ribosomal_L27"/>
    <property type="match status" value="1"/>
</dbReference>
<dbReference type="PRINTS" id="PR00063">
    <property type="entry name" value="RIBOSOMALL27"/>
</dbReference>
<dbReference type="SUPFAM" id="SSF110324">
    <property type="entry name" value="Ribosomal L27 protein-like"/>
    <property type="match status" value="1"/>
</dbReference>
<dbReference type="PROSITE" id="PS00831">
    <property type="entry name" value="RIBOSOMAL_L27"/>
    <property type="match status" value="1"/>
</dbReference>
<evidence type="ECO:0000255" key="1">
    <source>
        <dbReference type="HAMAP-Rule" id="MF_00539"/>
    </source>
</evidence>
<evidence type="ECO:0000256" key="2">
    <source>
        <dbReference type="SAM" id="MobiDB-lite"/>
    </source>
</evidence>
<evidence type="ECO:0000305" key="3"/>
<organism>
    <name type="scientific">Prochlorococcus marinus (strain MIT 9301)</name>
    <dbReference type="NCBI Taxonomy" id="167546"/>
    <lineage>
        <taxon>Bacteria</taxon>
        <taxon>Bacillati</taxon>
        <taxon>Cyanobacteriota</taxon>
        <taxon>Cyanophyceae</taxon>
        <taxon>Synechococcales</taxon>
        <taxon>Prochlorococcaceae</taxon>
        <taxon>Prochlorococcus</taxon>
    </lineage>
</organism>
<accession>A3PEH9</accession>
<protein>
    <recommendedName>
        <fullName evidence="1">Large ribosomal subunit protein bL27</fullName>
    </recommendedName>
    <alternativeName>
        <fullName evidence="3">50S ribosomal protein L27</fullName>
    </alternativeName>
</protein>
<reference key="1">
    <citation type="journal article" date="2007" name="PLoS Genet.">
        <title>Patterns and implications of gene gain and loss in the evolution of Prochlorococcus.</title>
        <authorList>
            <person name="Kettler G.C."/>
            <person name="Martiny A.C."/>
            <person name="Huang K."/>
            <person name="Zucker J."/>
            <person name="Coleman M.L."/>
            <person name="Rodrigue S."/>
            <person name="Chen F."/>
            <person name="Lapidus A."/>
            <person name="Ferriera S."/>
            <person name="Johnson J."/>
            <person name="Steglich C."/>
            <person name="Church G.M."/>
            <person name="Richardson P."/>
            <person name="Chisholm S.W."/>
        </authorList>
    </citation>
    <scope>NUCLEOTIDE SEQUENCE [LARGE SCALE GENOMIC DNA]</scope>
    <source>
        <strain>MIT 9301</strain>
    </source>
</reference>
<feature type="chain" id="PRO_1000017548" description="Large ribosomal subunit protein bL27">
    <location>
        <begin position="1"/>
        <end position="86"/>
    </location>
</feature>
<feature type="region of interest" description="Disordered" evidence="2">
    <location>
        <begin position="1"/>
        <end position="24"/>
    </location>
</feature>
<comment type="similarity">
    <text evidence="1">Belongs to the bacterial ribosomal protein bL27 family.</text>
</comment>
<sequence length="86" mass="9359">MAHKKGTGSTRNGRDSNSKRLGVKAYGGEKVTAGSILIRQRGTSFLPGINVGKGKDDTLFALKEGTVSFESIKRNLRNRKRVNIVI</sequence>
<keyword id="KW-1185">Reference proteome</keyword>
<keyword id="KW-0687">Ribonucleoprotein</keyword>
<keyword id="KW-0689">Ribosomal protein</keyword>
<name>RL27_PROM0</name>